<organism>
    <name type="scientific">Myxoma virus (strain Uriarra)</name>
    <name type="common">MYXV</name>
    <dbReference type="NCBI Taxonomy" id="265876"/>
    <lineage>
        <taxon>Viruses</taxon>
        <taxon>Varidnaviria</taxon>
        <taxon>Bamfordvirae</taxon>
        <taxon>Nucleocytoviricota</taxon>
        <taxon>Pokkesviricetes</taxon>
        <taxon>Chitovirales</taxon>
        <taxon>Poxviridae</taxon>
        <taxon>Chordopoxvirinae</taxon>
        <taxon>Leporipoxvirus</taxon>
        <taxon>Myxoma virus</taxon>
    </lineage>
</organism>
<dbReference type="EMBL" id="X52655">
    <property type="protein sequence ID" value="CAA36878.1"/>
    <property type="molecule type" value="Genomic_DNA"/>
</dbReference>
<dbReference type="PIR" id="PQ0282">
    <property type="entry name" value="PQ0282"/>
</dbReference>
<dbReference type="SMR" id="P28848"/>
<dbReference type="InterPro" id="IPR006956">
    <property type="entry name" value="Poxvirus_L5"/>
</dbReference>
<dbReference type="Pfam" id="PF04872">
    <property type="entry name" value="Pox_L5"/>
    <property type="match status" value="1"/>
</dbReference>
<feature type="chain" id="PRO_0000099747" description="MF6 protein">
    <location>
        <begin position="1" status="less than"/>
        <end position="96"/>
    </location>
</feature>
<feature type="non-terminal residue">
    <location>
        <position position="1"/>
    </location>
</feature>
<proteinExistence type="predicted"/>
<sequence>ELAVIALLIFLFFKTEFNMLLRNTVDLANDPIKQFTSTSLTCKGNALFIKHMPNSTELKPALAINRKQIVHENCAALLQSINGSRKVSLNDILERR</sequence>
<reference key="1">
    <citation type="journal article" date="1992" name="J. Gen. Virol.">
        <title>The myxoma virus thymidine kinase gene: sequence and transcriptional mapping.</title>
        <authorList>
            <person name="Jackson R.J."/>
            <person name="Bults H.G."/>
        </authorList>
    </citation>
    <scope>NUCLEOTIDE SEQUENCE [GENOMIC DNA]</scope>
</reference>
<name>VMF6_MYXVU</name>
<organismHost>
    <name type="scientific">Oryctolagus cuniculus</name>
    <name type="common">Rabbit</name>
    <dbReference type="NCBI Taxonomy" id="9986"/>
</organismHost>
<accession>P28848</accession>
<protein>
    <recommendedName>
        <fullName>MF6 protein</fullName>
    </recommendedName>
</protein>
<gene>
    <name type="ORF">MVF6</name>
</gene>